<gene>
    <name evidence="1" type="primary">acsF</name>
    <name type="ordered locus">A9601_10251</name>
</gene>
<accession>A2BR98</accession>
<dbReference type="EC" id="1.14.13.81" evidence="1"/>
<dbReference type="EMBL" id="CP000551">
    <property type="protein sequence ID" value="ABM70309.1"/>
    <property type="molecule type" value="Genomic_DNA"/>
</dbReference>
<dbReference type="RefSeq" id="WP_011818461.1">
    <property type="nucleotide sequence ID" value="NC_008816.1"/>
</dbReference>
<dbReference type="STRING" id="146891.A9601_10251"/>
<dbReference type="KEGG" id="pmb:A9601_10251"/>
<dbReference type="eggNOG" id="COG1633">
    <property type="taxonomic scope" value="Bacteria"/>
</dbReference>
<dbReference type="HOGENOM" id="CLU_048037_0_0_3"/>
<dbReference type="OrthoDB" id="141643at2"/>
<dbReference type="UniPathway" id="UPA00670"/>
<dbReference type="Proteomes" id="UP000002590">
    <property type="component" value="Chromosome"/>
</dbReference>
<dbReference type="GO" id="GO:0005506">
    <property type="term" value="F:iron ion binding"/>
    <property type="evidence" value="ECO:0007669"/>
    <property type="project" value="UniProtKB-UniRule"/>
</dbReference>
<dbReference type="GO" id="GO:0048529">
    <property type="term" value="F:magnesium-protoporphyrin IX monomethyl ester (oxidative) cyclase activity"/>
    <property type="evidence" value="ECO:0007669"/>
    <property type="project" value="UniProtKB-UniRule"/>
</dbReference>
<dbReference type="GO" id="GO:0036068">
    <property type="term" value="P:light-independent chlorophyll biosynthetic process"/>
    <property type="evidence" value="ECO:0007669"/>
    <property type="project" value="UniProtKB-UniRule"/>
</dbReference>
<dbReference type="GO" id="GO:0015979">
    <property type="term" value="P:photosynthesis"/>
    <property type="evidence" value="ECO:0007669"/>
    <property type="project" value="UniProtKB-UniRule"/>
</dbReference>
<dbReference type="HAMAP" id="MF_01840">
    <property type="entry name" value="AcsF"/>
    <property type="match status" value="1"/>
</dbReference>
<dbReference type="InterPro" id="IPR008434">
    <property type="entry name" value="AcsF"/>
</dbReference>
<dbReference type="InterPro" id="IPR009078">
    <property type="entry name" value="Ferritin-like_SF"/>
</dbReference>
<dbReference type="InterPro" id="IPR003251">
    <property type="entry name" value="Rr_diiron-bd_dom"/>
</dbReference>
<dbReference type="NCBIfam" id="TIGR02029">
    <property type="entry name" value="AcsF"/>
    <property type="match status" value="1"/>
</dbReference>
<dbReference type="NCBIfam" id="NF010172">
    <property type="entry name" value="PRK13654.1"/>
    <property type="match status" value="1"/>
</dbReference>
<dbReference type="PANTHER" id="PTHR31053">
    <property type="entry name" value="MAGNESIUM-PROTOPORPHYRIN IX MONOMETHYL ESTER [OXIDATIVE] CYCLASE, CHLOROPLASTIC"/>
    <property type="match status" value="1"/>
</dbReference>
<dbReference type="PANTHER" id="PTHR31053:SF2">
    <property type="entry name" value="MAGNESIUM-PROTOPORPHYRIN IX MONOMETHYL ESTER [OXIDATIVE] CYCLASE, CHLOROPLASTIC"/>
    <property type="match status" value="1"/>
</dbReference>
<dbReference type="Pfam" id="PF02915">
    <property type="entry name" value="Rubrerythrin"/>
    <property type="match status" value="1"/>
</dbReference>
<dbReference type="SUPFAM" id="SSF47240">
    <property type="entry name" value="Ferritin-like"/>
    <property type="match status" value="1"/>
</dbReference>
<evidence type="ECO:0000255" key="1">
    <source>
        <dbReference type="HAMAP-Rule" id="MF_01840"/>
    </source>
</evidence>
<protein>
    <recommendedName>
        <fullName evidence="1">Magnesium-protoporphyrin IX monomethyl ester [oxidative] cyclase</fullName>
        <shortName evidence="1">Mg-protoporphyrin IX monomethyl ester oxidative cyclase</shortName>
        <ecNumber evidence="1">1.14.13.81</ecNumber>
    </recommendedName>
</protein>
<name>ACSF_PROMS</name>
<proteinExistence type="inferred from homology"/>
<keyword id="KW-0149">Chlorophyll biosynthesis</keyword>
<keyword id="KW-0408">Iron</keyword>
<keyword id="KW-0479">Metal-binding</keyword>
<keyword id="KW-0521">NADP</keyword>
<keyword id="KW-0560">Oxidoreductase</keyword>
<keyword id="KW-0602">Photosynthesis</keyword>
<organism>
    <name type="scientific">Prochlorococcus marinus (strain AS9601)</name>
    <dbReference type="NCBI Taxonomy" id="146891"/>
    <lineage>
        <taxon>Bacteria</taxon>
        <taxon>Bacillati</taxon>
        <taxon>Cyanobacteriota</taxon>
        <taxon>Cyanophyceae</taxon>
        <taxon>Synechococcales</taxon>
        <taxon>Prochlorococcaceae</taxon>
        <taxon>Prochlorococcus</taxon>
    </lineage>
</organism>
<feature type="chain" id="PRO_1000070549" description="Magnesium-protoporphyrin IX monomethyl ester [oxidative] cyclase">
    <location>
        <begin position="1"/>
        <end position="390"/>
    </location>
</feature>
<sequence>MAQSTVESKNRKDINNGKIPAKETILSPRFYTTDFEAMENMDLSINEEELEAICEEFRKDYNRHHFVRNSEFEGAAEKLDPETRELFVDFLEGSCTSEFSGFLLYKELSKRIKVKNPLLAECFAHMARDEARHAGFLNKSMSDFGLQLDLGFLTANKDYTYFPPRSIFYATYLSEKIGYWRYIAIYRHLEKNPDSKIFPLFNYFENWCQDENRHGDFFDALMKAQPRTVKSLSKKITIGGSTFTHPLFDYFHRFRYFLNNLPLTSKLWSRFFLLAVFATMYARDLGIKKDFYSSLGLDARDYDQFVINKTNETAARVFPVVMDVYDNSFYGRLDKIVENNKVLSDIANSDGNKVSKTFKKLPKYLSNGYQLLRLYLLKPLDSKDFQPSIR</sequence>
<reference key="1">
    <citation type="journal article" date="2007" name="PLoS Genet.">
        <title>Patterns and implications of gene gain and loss in the evolution of Prochlorococcus.</title>
        <authorList>
            <person name="Kettler G.C."/>
            <person name="Martiny A.C."/>
            <person name="Huang K."/>
            <person name="Zucker J."/>
            <person name="Coleman M.L."/>
            <person name="Rodrigue S."/>
            <person name="Chen F."/>
            <person name="Lapidus A."/>
            <person name="Ferriera S."/>
            <person name="Johnson J."/>
            <person name="Steglich C."/>
            <person name="Church G.M."/>
            <person name="Richardson P."/>
            <person name="Chisholm S.W."/>
        </authorList>
    </citation>
    <scope>NUCLEOTIDE SEQUENCE [LARGE SCALE GENOMIC DNA]</scope>
    <source>
        <strain>AS9601</strain>
    </source>
</reference>
<comment type="function">
    <text evidence="1">Catalyzes the formation of the isocyclic ring in chlorophyll biosynthesis. Mediates the cyclase reaction, which results in the formation of divinylprotochlorophyllide (Pchlide) characteristic of all chlorophylls from magnesium-protoporphyrin IX 13-monomethyl ester (MgPMME).</text>
</comment>
<comment type="catalytic activity">
    <reaction evidence="1">
        <text>Mg-protoporphyrin IX 13-monomethyl ester + 3 NADPH + 3 O2 + 2 H(+) = 3,8-divinyl protochlorophyllide a + 3 NADP(+) + 5 H2O</text>
        <dbReference type="Rhea" id="RHEA:33235"/>
        <dbReference type="ChEBI" id="CHEBI:15377"/>
        <dbReference type="ChEBI" id="CHEBI:15378"/>
        <dbReference type="ChEBI" id="CHEBI:15379"/>
        <dbReference type="ChEBI" id="CHEBI:57783"/>
        <dbReference type="ChEBI" id="CHEBI:58349"/>
        <dbReference type="ChEBI" id="CHEBI:58632"/>
        <dbReference type="ChEBI" id="CHEBI:60491"/>
        <dbReference type="EC" id="1.14.13.81"/>
    </reaction>
</comment>
<comment type="cofactor">
    <cofactor evidence="1">
        <name>Fe cation</name>
        <dbReference type="ChEBI" id="CHEBI:24875"/>
    </cofactor>
</comment>
<comment type="pathway">
    <text evidence="1">Porphyrin-containing compound metabolism; chlorophyll biosynthesis (light-independent).</text>
</comment>
<comment type="similarity">
    <text evidence="1">Belongs to the AcsF family.</text>
</comment>